<comment type="function">
    <text evidence="1">Catalyzes the reversible transfer of the terminal phosphate group between ATP and AMP. Plays an important role in cellular energy homeostasis and in adenine nucleotide metabolism.</text>
</comment>
<comment type="catalytic activity">
    <reaction evidence="1">
        <text>AMP + ATP = 2 ADP</text>
        <dbReference type="Rhea" id="RHEA:12973"/>
        <dbReference type="ChEBI" id="CHEBI:30616"/>
        <dbReference type="ChEBI" id="CHEBI:456215"/>
        <dbReference type="ChEBI" id="CHEBI:456216"/>
        <dbReference type="EC" id="2.7.4.3"/>
    </reaction>
</comment>
<comment type="pathway">
    <text evidence="1">Purine metabolism; AMP biosynthesis via salvage pathway; AMP from ADP: step 1/1.</text>
</comment>
<comment type="subunit">
    <text evidence="1">Monomer.</text>
</comment>
<comment type="subcellular location">
    <subcellularLocation>
        <location evidence="1">Cytoplasm</location>
    </subcellularLocation>
</comment>
<comment type="domain">
    <text evidence="1">Consists of three domains, a large central CORE domain and two small peripheral domains, NMPbind and LID, which undergo movements during catalysis. The LID domain closes over the site of phosphoryl transfer upon ATP binding. Assembling and dissambling the active center during each catalytic cycle provides an effective means to prevent ATP hydrolysis.</text>
</comment>
<comment type="similarity">
    <text evidence="1">Belongs to the adenylate kinase family.</text>
</comment>
<accession>Q0KE20</accession>
<dbReference type="EC" id="2.7.4.3" evidence="1"/>
<dbReference type="EMBL" id="AM260479">
    <property type="protein sequence ID" value="CAJ91751.1"/>
    <property type="molecule type" value="Genomic_DNA"/>
</dbReference>
<dbReference type="RefSeq" id="WP_010812253.1">
    <property type="nucleotide sequence ID" value="NZ_CP039287.1"/>
</dbReference>
<dbReference type="SMR" id="Q0KE20"/>
<dbReference type="STRING" id="381666.H16_A0603"/>
<dbReference type="KEGG" id="reh:H16_A0603"/>
<dbReference type="eggNOG" id="COG0563">
    <property type="taxonomic scope" value="Bacteria"/>
</dbReference>
<dbReference type="HOGENOM" id="CLU_032354_1_2_4"/>
<dbReference type="OrthoDB" id="9805030at2"/>
<dbReference type="UniPathway" id="UPA00588">
    <property type="reaction ID" value="UER00649"/>
</dbReference>
<dbReference type="Proteomes" id="UP000008210">
    <property type="component" value="Chromosome 1"/>
</dbReference>
<dbReference type="GO" id="GO:0005737">
    <property type="term" value="C:cytoplasm"/>
    <property type="evidence" value="ECO:0007669"/>
    <property type="project" value="UniProtKB-SubCell"/>
</dbReference>
<dbReference type="GO" id="GO:0004017">
    <property type="term" value="F:adenylate kinase activity"/>
    <property type="evidence" value="ECO:0007669"/>
    <property type="project" value="UniProtKB-UniRule"/>
</dbReference>
<dbReference type="GO" id="GO:0005524">
    <property type="term" value="F:ATP binding"/>
    <property type="evidence" value="ECO:0007669"/>
    <property type="project" value="UniProtKB-UniRule"/>
</dbReference>
<dbReference type="GO" id="GO:0044209">
    <property type="term" value="P:AMP salvage"/>
    <property type="evidence" value="ECO:0007669"/>
    <property type="project" value="UniProtKB-UniRule"/>
</dbReference>
<dbReference type="CDD" id="cd01428">
    <property type="entry name" value="ADK"/>
    <property type="match status" value="1"/>
</dbReference>
<dbReference type="FunFam" id="3.40.50.300:FF:000106">
    <property type="entry name" value="Adenylate kinase mitochondrial"/>
    <property type="match status" value="1"/>
</dbReference>
<dbReference type="Gene3D" id="3.40.50.300">
    <property type="entry name" value="P-loop containing nucleotide triphosphate hydrolases"/>
    <property type="match status" value="1"/>
</dbReference>
<dbReference type="HAMAP" id="MF_00235">
    <property type="entry name" value="Adenylate_kinase_Adk"/>
    <property type="match status" value="1"/>
</dbReference>
<dbReference type="InterPro" id="IPR006259">
    <property type="entry name" value="Adenyl_kin_sub"/>
</dbReference>
<dbReference type="InterPro" id="IPR000850">
    <property type="entry name" value="Adenylat/UMP-CMP_kin"/>
</dbReference>
<dbReference type="InterPro" id="IPR033690">
    <property type="entry name" value="Adenylat_kinase_CS"/>
</dbReference>
<dbReference type="InterPro" id="IPR007862">
    <property type="entry name" value="Adenylate_kinase_lid-dom"/>
</dbReference>
<dbReference type="InterPro" id="IPR027417">
    <property type="entry name" value="P-loop_NTPase"/>
</dbReference>
<dbReference type="NCBIfam" id="TIGR01351">
    <property type="entry name" value="adk"/>
    <property type="match status" value="1"/>
</dbReference>
<dbReference type="NCBIfam" id="NF001379">
    <property type="entry name" value="PRK00279.1-1"/>
    <property type="match status" value="1"/>
</dbReference>
<dbReference type="NCBIfam" id="NF001380">
    <property type="entry name" value="PRK00279.1-2"/>
    <property type="match status" value="1"/>
</dbReference>
<dbReference type="NCBIfam" id="NF001381">
    <property type="entry name" value="PRK00279.1-3"/>
    <property type="match status" value="1"/>
</dbReference>
<dbReference type="NCBIfam" id="NF011100">
    <property type="entry name" value="PRK14527.1"/>
    <property type="match status" value="1"/>
</dbReference>
<dbReference type="PANTHER" id="PTHR23359">
    <property type="entry name" value="NUCLEOTIDE KINASE"/>
    <property type="match status" value="1"/>
</dbReference>
<dbReference type="Pfam" id="PF00406">
    <property type="entry name" value="ADK"/>
    <property type="match status" value="1"/>
</dbReference>
<dbReference type="Pfam" id="PF05191">
    <property type="entry name" value="ADK_lid"/>
    <property type="match status" value="1"/>
</dbReference>
<dbReference type="PRINTS" id="PR00094">
    <property type="entry name" value="ADENYLTKNASE"/>
</dbReference>
<dbReference type="SUPFAM" id="SSF52540">
    <property type="entry name" value="P-loop containing nucleoside triphosphate hydrolases"/>
    <property type="match status" value="1"/>
</dbReference>
<dbReference type="PROSITE" id="PS00113">
    <property type="entry name" value="ADENYLATE_KINASE"/>
    <property type="match status" value="1"/>
</dbReference>
<organism>
    <name type="scientific">Cupriavidus necator (strain ATCC 17699 / DSM 428 / KCTC 22496 / NCIMB 10442 / H16 / Stanier 337)</name>
    <name type="common">Ralstonia eutropha</name>
    <dbReference type="NCBI Taxonomy" id="381666"/>
    <lineage>
        <taxon>Bacteria</taxon>
        <taxon>Pseudomonadati</taxon>
        <taxon>Pseudomonadota</taxon>
        <taxon>Betaproteobacteria</taxon>
        <taxon>Burkholderiales</taxon>
        <taxon>Burkholderiaceae</taxon>
        <taxon>Cupriavidus</taxon>
    </lineage>
</organism>
<feature type="chain" id="PRO_1000021761" description="Adenylate kinase">
    <location>
        <begin position="1"/>
        <end position="221"/>
    </location>
</feature>
<feature type="region of interest" description="NMP" evidence="1">
    <location>
        <begin position="30"/>
        <end position="59"/>
    </location>
</feature>
<feature type="region of interest" description="LID" evidence="1">
    <location>
        <begin position="122"/>
        <end position="159"/>
    </location>
</feature>
<feature type="binding site" evidence="1">
    <location>
        <begin position="10"/>
        <end position="15"/>
    </location>
    <ligand>
        <name>ATP</name>
        <dbReference type="ChEBI" id="CHEBI:30616"/>
    </ligand>
</feature>
<feature type="binding site" evidence="1">
    <location>
        <position position="31"/>
    </location>
    <ligand>
        <name>AMP</name>
        <dbReference type="ChEBI" id="CHEBI:456215"/>
    </ligand>
</feature>
<feature type="binding site" evidence="1">
    <location>
        <position position="36"/>
    </location>
    <ligand>
        <name>AMP</name>
        <dbReference type="ChEBI" id="CHEBI:456215"/>
    </ligand>
</feature>
<feature type="binding site" evidence="1">
    <location>
        <begin position="57"/>
        <end position="59"/>
    </location>
    <ligand>
        <name>AMP</name>
        <dbReference type="ChEBI" id="CHEBI:456215"/>
    </ligand>
</feature>
<feature type="binding site" evidence="1">
    <location>
        <begin position="85"/>
        <end position="88"/>
    </location>
    <ligand>
        <name>AMP</name>
        <dbReference type="ChEBI" id="CHEBI:456215"/>
    </ligand>
</feature>
<feature type="binding site" evidence="1">
    <location>
        <position position="92"/>
    </location>
    <ligand>
        <name>AMP</name>
        <dbReference type="ChEBI" id="CHEBI:456215"/>
    </ligand>
</feature>
<feature type="binding site" evidence="1">
    <location>
        <position position="123"/>
    </location>
    <ligand>
        <name>ATP</name>
        <dbReference type="ChEBI" id="CHEBI:30616"/>
    </ligand>
</feature>
<feature type="binding site" evidence="1">
    <location>
        <begin position="132"/>
        <end position="133"/>
    </location>
    <ligand>
        <name>ATP</name>
        <dbReference type="ChEBI" id="CHEBI:30616"/>
    </ligand>
</feature>
<feature type="binding site" evidence="1">
    <location>
        <position position="156"/>
    </location>
    <ligand>
        <name>AMP</name>
        <dbReference type="ChEBI" id="CHEBI:456215"/>
    </ligand>
</feature>
<feature type="binding site" evidence="1">
    <location>
        <position position="167"/>
    </location>
    <ligand>
        <name>AMP</name>
        <dbReference type="ChEBI" id="CHEBI:456215"/>
    </ligand>
</feature>
<feature type="binding site" evidence="1">
    <location>
        <position position="207"/>
    </location>
    <ligand>
        <name>ATP</name>
        <dbReference type="ChEBI" id="CHEBI:30616"/>
    </ligand>
</feature>
<keyword id="KW-0067">ATP-binding</keyword>
<keyword id="KW-0963">Cytoplasm</keyword>
<keyword id="KW-0418">Kinase</keyword>
<keyword id="KW-0545">Nucleotide biosynthesis</keyword>
<keyword id="KW-0547">Nucleotide-binding</keyword>
<keyword id="KW-1185">Reference proteome</keyword>
<keyword id="KW-0808">Transferase</keyword>
<protein>
    <recommendedName>
        <fullName evidence="1">Adenylate kinase</fullName>
        <shortName evidence="1">AK</shortName>
        <ecNumber evidence="1">2.7.4.3</ecNumber>
    </recommendedName>
    <alternativeName>
        <fullName evidence="1">ATP-AMP transphosphorylase</fullName>
    </alternativeName>
    <alternativeName>
        <fullName evidence="1">ATP:AMP phosphotransferase</fullName>
    </alternativeName>
    <alternativeName>
        <fullName evidence="1">Adenylate monophosphate kinase</fullName>
    </alternativeName>
</protein>
<evidence type="ECO:0000255" key="1">
    <source>
        <dbReference type="HAMAP-Rule" id="MF_00235"/>
    </source>
</evidence>
<reference key="1">
    <citation type="journal article" date="2006" name="Nat. Biotechnol.">
        <title>Genome sequence of the bioplastic-producing 'Knallgas' bacterium Ralstonia eutropha H16.</title>
        <authorList>
            <person name="Pohlmann A."/>
            <person name="Fricke W.F."/>
            <person name="Reinecke F."/>
            <person name="Kusian B."/>
            <person name="Liesegang H."/>
            <person name="Cramm R."/>
            <person name="Eitinger T."/>
            <person name="Ewering C."/>
            <person name="Poetter M."/>
            <person name="Schwartz E."/>
            <person name="Strittmatter A."/>
            <person name="Voss I."/>
            <person name="Gottschalk G."/>
            <person name="Steinbuechel A."/>
            <person name="Friedrich B."/>
            <person name="Bowien B."/>
        </authorList>
    </citation>
    <scope>NUCLEOTIDE SEQUENCE [LARGE SCALE GENOMIC DNA]</scope>
    <source>
        <strain>ATCC 17699 / DSM 428 / KCTC 22496 / NCIMB 10442 / H16 / Stanier 337</strain>
    </source>
</reference>
<proteinExistence type="inferred from homology"/>
<sequence>MRLILLGAPGAGKGTQAKFICEKFGIPQISTGDMLRAAVKAGTPLGVEAKKVMDAGGLVSDDIIIGLVKDRLKEDDCKNGYLFDGFPRTIPQAEAMKEAGVAIDYVLEIDVPFDAIIERMSGRRVHVASGRTYHVKYNPPKTEGVDDETGEALIQRDDDKEETVKKRLDVYSQQTRPLVDYYSEWAAKGDASAKVAPPQYRKILGVGNVDEITARVFEALK</sequence>
<gene>
    <name evidence="1" type="primary">adk</name>
    <name type="ordered locus">H16_A0603</name>
</gene>
<name>KAD_CUPNH</name>